<keyword id="KW-0456">Lyase</keyword>
<gene>
    <name evidence="1" type="primary">mgsA</name>
    <name type="ordered locus">BOV_A0986</name>
</gene>
<proteinExistence type="inferred from homology"/>
<comment type="function">
    <text evidence="1">Catalyzes the formation of methylglyoxal from dihydroxyacetone phosphate.</text>
</comment>
<comment type="catalytic activity">
    <reaction evidence="1">
        <text>dihydroxyacetone phosphate = methylglyoxal + phosphate</text>
        <dbReference type="Rhea" id="RHEA:17937"/>
        <dbReference type="ChEBI" id="CHEBI:17158"/>
        <dbReference type="ChEBI" id="CHEBI:43474"/>
        <dbReference type="ChEBI" id="CHEBI:57642"/>
        <dbReference type="EC" id="4.2.3.3"/>
    </reaction>
</comment>
<comment type="similarity">
    <text evidence="1">Belongs to the methylglyoxal synthase family.</text>
</comment>
<name>MGSA_BRUO2</name>
<accession>A5VVV1</accession>
<protein>
    <recommendedName>
        <fullName evidence="1">Methylglyoxal synthase</fullName>
        <shortName evidence="1">MGS</shortName>
        <ecNumber evidence="1">4.2.3.3</ecNumber>
    </recommendedName>
</protein>
<reference key="1">
    <citation type="journal article" date="2009" name="PLoS ONE">
        <title>Genome degradation in Brucella ovis corresponds with narrowing of its host range and tissue tropism.</title>
        <authorList>
            <person name="Tsolis R.M."/>
            <person name="Seshadri R."/>
            <person name="Santos R.L."/>
            <person name="Sangari F.J."/>
            <person name="Lobo J.M."/>
            <person name="de Jong M.F."/>
            <person name="Ren Q."/>
            <person name="Myers G."/>
            <person name="Brinkac L.M."/>
            <person name="Nelson W.C."/>
            <person name="Deboy R.T."/>
            <person name="Angiuoli S."/>
            <person name="Khouri H."/>
            <person name="Dimitrov G."/>
            <person name="Robinson J.R."/>
            <person name="Mulligan S."/>
            <person name="Walker R.L."/>
            <person name="Elzer P.E."/>
            <person name="Hassan K.A."/>
            <person name="Paulsen I.T."/>
        </authorList>
    </citation>
    <scope>NUCLEOTIDE SEQUENCE [LARGE SCALE GENOMIC DNA]</scope>
    <source>
        <strain>ATCC 25840 / 63/290 / NCTC 10512</strain>
    </source>
</reference>
<sequence length="125" mass="13546">MTQRLRIALIAHDQKKDDMVAFARAHEQALSRYDIVATGTTGGLIQDACPSLNIHRVKSGPLGGDQQIGAMIAEGTVEVLIFFIDPLSPLPHDVDVKALTRLGSVYDIPMALNRATAEKLVRALD</sequence>
<evidence type="ECO:0000255" key="1">
    <source>
        <dbReference type="HAMAP-Rule" id="MF_00549"/>
    </source>
</evidence>
<dbReference type="EC" id="4.2.3.3" evidence="1"/>
<dbReference type="EMBL" id="CP000709">
    <property type="protein sequence ID" value="ABQ62633.1"/>
    <property type="molecule type" value="Genomic_DNA"/>
</dbReference>
<dbReference type="RefSeq" id="WP_002965604.1">
    <property type="nucleotide sequence ID" value="NC_009504.1"/>
</dbReference>
<dbReference type="SMR" id="A5VVV1"/>
<dbReference type="KEGG" id="bov:BOV_A0986"/>
<dbReference type="HOGENOM" id="CLU_120420_1_0_5"/>
<dbReference type="PhylomeDB" id="A5VVV1"/>
<dbReference type="Proteomes" id="UP000006383">
    <property type="component" value="Chromosome II"/>
</dbReference>
<dbReference type="GO" id="GO:0005829">
    <property type="term" value="C:cytosol"/>
    <property type="evidence" value="ECO:0007669"/>
    <property type="project" value="TreeGrafter"/>
</dbReference>
<dbReference type="GO" id="GO:0008929">
    <property type="term" value="F:methylglyoxal synthase activity"/>
    <property type="evidence" value="ECO:0007669"/>
    <property type="project" value="UniProtKB-UniRule"/>
</dbReference>
<dbReference type="GO" id="GO:0019242">
    <property type="term" value="P:methylglyoxal biosynthetic process"/>
    <property type="evidence" value="ECO:0007669"/>
    <property type="project" value="UniProtKB-UniRule"/>
</dbReference>
<dbReference type="CDD" id="cd01422">
    <property type="entry name" value="MGS"/>
    <property type="match status" value="1"/>
</dbReference>
<dbReference type="Gene3D" id="3.40.50.1380">
    <property type="entry name" value="Methylglyoxal synthase-like domain"/>
    <property type="match status" value="1"/>
</dbReference>
<dbReference type="HAMAP" id="MF_00549">
    <property type="entry name" value="Methylglyoxal_synth"/>
    <property type="match status" value="1"/>
</dbReference>
<dbReference type="InterPro" id="IPR004363">
    <property type="entry name" value="Methylgl_synth"/>
</dbReference>
<dbReference type="InterPro" id="IPR018148">
    <property type="entry name" value="Methylglyoxal_synth_AS"/>
</dbReference>
<dbReference type="InterPro" id="IPR011607">
    <property type="entry name" value="MGS-like_dom"/>
</dbReference>
<dbReference type="InterPro" id="IPR036914">
    <property type="entry name" value="MGS-like_dom_sf"/>
</dbReference>
<dbReference type="NCBIfam" id="TIGR00160">
    <property type="entry name" value="MGSA"/>
    <property type="match status" value="1"/>
</dbReference>
<dbReference type="NCBIfam" id="NF003559">
    <property type="entry name" value="PRK05234.1"/>
    <property type="match status" value="1"/>
</dbReference>
<dbReference type="PANTHER" id="PTHR30492">
    <property type="entry name" value="METHYLGLYOXAL SYNTHASE"/>
    <property type="match status" value="1"/>
</dbReference>
<dbReference type="PANTHER" id="PTHR30492:SF0">
    <property type="entry name" value="METHYLGLYOXAL SYNTHASE"/>
    <property type="match status" value="1"/>
</dbReference>
<dbReference type="Pfam" id="PF02142">
    <property type="entry name" value="MGS"/>
    <property type="match status" value="1"/>
</dbReference>
<dbReference type="PIRSF" id="PIRSF006614">
    <property type="entry name" value="Methylglyox_syn"/>
    <property type="match status" value="1"/>
</dbReference>
<dbReference type="SMART" id="SM00851">
    <property type="entry name" value="MGS"/>
    <property type="match status" value="1"/>
</dbReference>
<dbReference type="SUPFAM" id="SSF52335">
    <property type="entry name" value="Methylglyoxal synthase-like"/>
    <property type="match status" value="1"/>
</dbReference>
<dbReference type="PROSITE" id="PS01335">
    <property type="entry name" value="METHYLGLYOXAL_SYNTH"/>
    <property type="match status" value="1"/>
</dbReference>
<dbReference type="PROSITE" id="PS51855">
    <property type="entry name" value="MGS"/>
    <property type="match status" value="1"/>
</dbReference>
<feature type="chain" id="PRO_1000017788" description="Methylglyoxal synthase">
    <location>
        <begin position="1"/>
        <end position="125"/>
    </location>
</feature>
<feature type="domain" description="MGS-like" evidence="1">
    <location>
        <begin position="1"/>
        <end position="125"/>
    </location>
</feature>
<feature type="active site" description="Proton donor/acceptor" evidence="1">
    <location>
        <position position="65"/>
    </location>
</feature>
<feature type="binding site" evidence="1">
    <location>
        <position position="12"/>
    </location>
    <ligand>
        <name>substrate</name>
    </ligand>
</feature>
<feature type="binding site" evidence="1">
    <location>
        <position position="16"/>
    </location>
    <ligand>
        <name>substrate</name>
    </ligand>
</feature>
<feature type="binding site" evidence="1">
    <location>
        <begin position="38"/>
        <end position="41"/>
    </location>
    <ligand>
        <name>substrate</name>
    </ligand>
</feature>
<feature type="binding site" evidence="1">
    <location>
        <begin position="59"/>
        <end position="60"/>
    </location>
    <ligand>
        <name>substrate</name>
    </ligand>
</feature>
<feature type="binding site" evidence="1">
    <location>
        <position position="92"/>
    </location>
    <ligand>
        <name>substrate</name>
    </ligand>
</feature>
<organism>
    <name type="scientific">Brucella ovis (strain ATCC 25840 / 63/290 / NCTC 10512)</name>
    <dbReference type="NCBI Taxonomy" id="444178"/>
    <lineage>
        <taxon>Bacteria</taxon>
        <taxon>Pseudomonadati</taxon>
        <taxon>Pseudomonadota</taxon>
        <taxon>Alphaproteobacteria</taxon>
        <taxon>Hyphomicrobiales</taxon>
        <taxon>Brucellaceae</taxon>
        <taxon>Brucella/Ochrobactrum group</taxon>
        <taxon>Brucella</taxon>
    </lineage>
</organism>